<evidence type="ECO:0000255" key="1">
    <source>
        <dbReference type="HAMAP-Rule" id="MF_00075"/>
    </source>
</evidence>
<sequence>MAGNDVIEIEGVIKETKPNANFIVELENGARIQAGVSGKIRKNYIRILVGDRVTVEMSPYDLTKGRITYRHK</sequence>
<comment type="function">
    <text evidence="1">One of the essential components for the initiation of protein synthesis. Stabilizes the binding of IF-2 and IF-3 on the 30S subunit to which N-formylmethionyl-tRNA(fMet) subsequently binds. Helps modulate mRNA selection, yielding the 30S pre-initiation complex (PIC). Upon addition of the 50S ribosomal subunit IF-1, IF-2 and IF-3 are released leaving the mature 70S translation initiation complex.</text>
</comment>
<comment type="subunit">
    <text evidence="1">Component of the 30S ribosomal translation pre-initiation complex which assembles on the 30S ribosome in the order IF-2 and IF-3, IF-1 and N-formylmethionyl-tRNA(fMet); mRNA recruitment can occur at any time during PIC assembly.</text>
</comment>
<comment type="subcellular location">
    <subcellularLocation>
        <location evidence="1">Cytoplasm</location>
    </subcellularLocation>
</comment>
<comment type="similarity">
    <text evidence="1">Belongs to the IF-1 family.</text>
</comment>
<name>IF1_OENOB</name>
<accession>Q04G64</accession>
<reference key="1">
    <citation type="journal article" date="2006" name="Proc. Natl. Acad. Sci. U.S.A.">
        <title>Comparative genomics of the lactic acid bacteria.</title>
        <authorList>
            <person name="Makarova K.S."/>
            <person name="Slesarev A."/>
            <person name="Wolf Y.I."/>
            <person name="Sorokin A."/>
            <person name="Mirkin B."/>
            <person name="Koonin E.V."/>
            <person name="Pavlov A."/>
            <person name="Pavlova N."/>
            <person name="Karamychev V."/>
            <person name="Polouchine N."/>
            <person name="Shakhova V."/>
            <person name="Grigoriev I."/>
            <person name="Lou Y."/>
            <person name="Rohksar D."/>
            <person name="Lucas S."/>
            <person name="Huang K."/>
            <person name="Goodstein D.M."/>
            <person name="Hawkins T."/>
            <person name="Plengvidhya V."/>
            <person name="Welker D."/>
            <person name="Hughes J."/>
            <person name="Goh Y."/>
            <person name="Benson A."/>
            <person name="Baldwin K."/>
            <person name="Lee J.-H."/>
            <person name="Diaz-Muniz I."/>
            <person name="Dosti B."/>
            <person name="Smeianov V."/>
            <person name="Wechter W."/>
            <person name="Barabote R."/>
            <person name="Lorca G."/>
            <person name="Altermann E."/>
            <person name="Barrangou R."/>
            <person name="Ganesan B."/>
            <person name="Xie Y."/>
            <person name="Rawsthorne H."/>
            <person name="Tamir D."/>
            <person name="Parker C."/>
            <person name="Breidt F."/>
            <person name="Broadbent J.R."/>
            <person name="Hutkins R."/>
            <person name="O'Sullivan D."/>
            <person name="Steele J."/>
            <person name="Unlu G."/>
            <person name="Saier M.H. Jr."/>
            <person name="Klaenhammer T."/>
            <person name="Richardson P."/>
            <person name="Kozyavkin S."/>
            <person name="Weimer B.C."/>
            <person name="Mills D.A."/>
        </authorList>
    </citation>
    <scope>NUCLEOTIDE SEQUENCE [LARGE SCALE GENOMIC DNA]</scope>
    <source>
        <strain>ATCC BAA-331 / PSU-1</strain>
    </source>
</reference>
<keyword id="KW-0963">Cytoplasm</keyword>
<keyword id="KW-0396">Initiation factor</keyword>
<keyword id="KW-0648">Protein biosynthesis</keyword>
<keyword id="KW-1185">Reference proteome</keyword>
<keyword id="KW-0694">RNA-binding</keyword>
<keyword id="KW-0699">rRNA-binding</keyword>
<dbReference type="EMBL" id="CP000411">
    <property type="protein sequence ID" value="ABJ56558.1"/>
    <property type="molecule type" value="Genomic_DNA"/>
</dbReference>
<dbReference type="SMR" id="Q04G64"/>
<dbReference type="STRING" id="203123.OEOE_0616"/>
<dbReference type="KEGG" id="ooe:OEOE_0616"/>
<dbReference type="eggNOG" id="COG0361">
    <property type="taxonomic scope" value="Bacteria"/>
</dbReference>
<dbReference type="HOGENOM" id="CLU_151267_1_0_9"/>
<dbReference type="Proteomes" id="UP000000774">
    <property type="component" value="Chromosome"/>
</dbReference>
<dbReference type="GO" id="GO:0005829">
    <property type="term" value="C:cytosol"/>
    <property type="evidence" value="ECO:0007669"/>
    <property type="project" value="TreeGrafter"/>
</dbReference>
<dbReference type="GO" id="GO:0043022">
    <property type="term" value="F:ribosome binding"/>
    <property type="evidence" value="ECO:0007669"/>
    <property type="project" value="UniProtKB-UniRule"/>
</dbReference>
<dbReference type="GO" id="GO:0019843">
    <property type="term" value="F:rRNA binding"/>
    <property type="evidence" value="ECO:0007669"/>
    <property type="project" value="UniProtKB-UniRule"/>
</dbReference>
<dbReference type="GO" id="GO:0003743">
    <property type="term" value="F:translation initiation factor activity"/>
    <property type="evidence" value="ECO:0007669"/>
    <property type="project" value="UniProtKB-UniRule"/>
</dbReference>
<dbReference type="CDD" id="cd04451">
    <property type="entry name" value="S1_IF1"/>
    <property type="match status" value="1"/>
</dbReference>
<dbReference type="FunFam" id="2.40.50.140:FF:000002">
    <property type="entry name" value="Translation initiation factor IF-1"/>
    <property type="match status" value="1"/>
</dbReference>
<dbReference type="Gene3D" id="2.40.50.140">
    <property type="entry name" value="Nucleic acid-binding proteins"/>
    <property type="match status" value="1"/>
</dbReference>
<dbReference type="HAMAP" id="MF_00075">
    <property type="entry name" value="IF_1"/>
    <property type="match status" value="1"/>
</dbReference>
<dbReference type="InterPro" id="IPR012340">
    <property type="entry name" value="NA-bd_OB-fold"/>
</dbReference>
<dbReference type="InterPro" id="IPR006196">
    <property type="entry name" value="RNA-binding_domain_S1_IF1"/>
</dbReference>
<dbReference type="InterPro" id="IPR003029">
    <property type="entry name" value="S1_domain"/>
</dbReference>
<dbReference type="InterPro" id="IPR004368">
    <property type="entry name" value="TIF_IF1"/>
</dbReference>
<dbReference type="NCBIfam" id="TIGR00008">
    <property type="entry name" value="infA"/>
    <property type="match status" value="1"/>
</dbReference>
<dbReference type="PANTHER" id="PTHR33370">
    <property type="entry name" value="TRANSLATION INITIATION FACTOR IF-1, CHLOROPLASTIC"/>
    <property type="match status" value="1"/>
</dbReference>
<dbReference type="PANTHER" id="PTHR33370:SF1">
    <property type="entry name" value="TRANSLATION INITIATION FACTOR IF-1, CHLOROPLASTIC"/>
    <property type="match status" value="1"/>
</dbReference>
<dbReference type="Pfam" id="PF01176">
    <property type="entry name" value="eIF-1a"/>
    <property type="match status" value="1"/>
</dbReference>
<dbReference type="SMART" id="SM00316">
    <property type="entry name" value="S1"/>
    <property type="match status" value="1"/>
</dbReference>
<dbReference type="SUPFAM" id="SSF50249">
    <property type="entry name" value="Nucleic acid-binding proteins"/>
    <property type="match status" value="1"/>
</dbReference>
<dbReference type="PROSITE" id="PS50832">
    <property type="entry name" value="S1_IF1_TYPE"/>
    <property type="match status" value="1"/>
</dbReference>
<protein>
    <recommendedName>
        <fullName evidence="1">Translation initiation factor IF-1</fullName>
    </recommendedName>
</protein>
<feature type="chain" id="PRO_0000338875" description="Translation initiation factor IF-1">
    <location>
        <begin position="1"/>
        <end position="72"/>
    </location>
</feature>
<feature type="domain" description="S1-like" evidence="1">
    <location>
        <begin position="1"/>
        <end position="72"/>
    </location>
</feature>
<organism>
    <name type="scientific">Oenococcus oeni (strain ATCC BAA-331 / PSU-1)</name>
    <dbReference type="NCBI Taxonomy" id="203123"/>
    <lineage>
        <taxon>Bacteria</taxon>
        <taxon>Bacillati</taxon>
        <taxon>Bacillota</taxon>
        <taxon>Bacilli</taxon>
        <taxon>Lactobacillales</taxon>
        <taxon>Lactobacillaceae</taxon>
        <taxon>Oenococcus</taxon>
    </lineage>
</organism>
<gene>
    <name evidence="1" type="primary">infA</name>
    <name type="ordered locus">OEOE_0616</name>
</gene>
<proteinExistence type="inferred from homology"/>